<geneLocation type="mitochondrion"/>
<comment type="function">
    <text evidence="2">Component of the cytochrome c oxidase, the last enzyme in the mitochondrial electron transport chain which drives oxidative phosphorylation. The respiratory chain contains 3 multisubunit complexes succinate dehydrogenase (complex II, CII), ubiquinol-cytochrome c oxidoreductase (cytochrome b-c1 complex, complex III, CIII) and cytochrome c oxidase (complex IV, CIV), that cooperate to transfer electrons derived from NADH and succinate to molecular oxygen, creating an electrochemical gradient over the inner membrane that drives transmembrane transport and the ATP synthase. Cytochrome c oxidase is the component of the respiratory chain that catalyzes the reduction of oxygen to water. Electrons originating from reduced cytochrome c in the intermembrane space (IMS) are transferred via the dinuclear copper A center (CU(A)) of subunit 2 and heme A of subunit 1 to the active site in subunit 1, a binuclear center (BNC) formed by heme A3 and copper B (CU(B)). The BNC reduces molecular oxygen to 2 water molecules using 4 electrons from cytochrome c in the IMS and 4 protons from the mitochondrial matrix.</text>
</comment>
<comment type="catalytic activity">
    <reaction evidence="2">
        <text>4 Fe(II)-[cytochrome c] + O2 + 8 H(+)(in) = 4 Fe(III)-[cytochrome c] + 2 H2O + 4 H(+)(out)</text>
        <dbReference type="Rhea" id="RHEA:11436"/>
        <dbReference type="Rhea" id="RHEA-COMP:10350"/>
        <dbReference type="Rhea" id="RHEA-COMP:14399"/>
        <dbReference type="ChEBI" id="CHEBI:15377"/>
        <dbReference type="ChEBI" id="CHEBI:15378"/>
        <dbReference type="ChEBI" id="CHEBI:15379"/>
        <dbReference type="ChEBI" id="CHEBI:29033"/>
        <dbReference type="ChEBI" id="CHEBI:29034"/>
        <dbReference type="EC" id="7.1.1.9"/>
    </reaction>
    <physiologicalReaction direction="left-to-right" evidence="2">
        <dbReference type="Rhea" id="RHEA:11437"/>
    </physiologicalReaction>
</comment>
<comment type="cofactor">
    <cofactor evidence="2">
        <name>heme</name>
        <dbReference type="ChEBI" id="CHEBI:30413"/>
    </cofactor>
    <text evidence="2">Binds 2 heme A groups non-covalently per subunit.</text>
</comment>
<comment type="cofactor">
    <cofactor evidence="2">
        <name>Cu cation</name>
        <dbReference type="ChEBI" id="CHEBI:23378"/>
    </cofactor>
    <text evidence="2">Binds a copper B center.</text>
</comment>
<comment type="pathway">
    <text evidence="2">Energy metabolism; oxidative phosphorylation.</text>
</comment>
<comment type="subunit">
    <text evidence="2">Component of the cytochrome c oxidase (complex IV, CIV), a multisubunit enzyme composed of a catalytic core of 3 subunits and several supernumerary subunits. The complex exists as a monomer or a dimer and forms supercomplexes (SCs) in the inner mitochondrial membrane with ubiquinol-cytochrome c oxidoreductase (cytochrome b-c1 complex, complex III, CIII).</text>
</comment>
<comment type="subcellular location">
    <subcellularLocation>
        <location evidence="2">Mitochondrion inner membrane</location>
        <topology evidence="2">Multi-pass membrane protein</topology>
    </subcellularLocation>
</comment>
<comment type="similarity">
    <text evidence="4">Belongs to the heme-copper respiratory oxidase family.</text>
</comment>
<evidence type="ECO:0000250" key="1">
    <source>
        <dbReference type="UniProtKB" id="P00396"/>
    </source>
</evidence>
<evidence type="ECO:0000250" key="2">
    <source>
        <dbReference type="UniProtKB" id="P00401"/>
    </source>
</evidence>
<evidence type="ECO:0000255" key="3"/>
<evidence type="ECO:0000305" key="4"/>
<dbReference type="EC" id="7.1.1.9"/>
<dbReference type="EMBL" id="M76611">
    <property type="protein sequence ID" value="AAC63390.2"/>
    <property type="status" value="ALT_SEQ"/>
    <property type="molecule type" value="Genomic_DNA"/>
</dbReference>
<dbReference type="EMBL" id="M99416">
    <property type="protein sequence ID" value="AAC06269.1"/>
    <property type="status" value="ALT_SEQ"/>
    <property type="molecule type" value="Genomic_DNA"/>
</dbReference>
<dbReference type="SMR" id="Q02766"/>
<dbReference type="VEuPathDB" id="PlasmoDB:PF3D7_MIT02100"/>
<dbReference type="VEuPathDB" id="PlasmoDB:Pf7G8-2_000005000"/>
<dbReference type="VEuPathDB" id="PlasmoDB:Pf7G8_000015800"/>
<dbReference type="VEuPathDB" id="PlasmoDB:PfDd2_000011800"/>
<dbReference type="VEuPathDB" id="PlasmoDB:PfGA01_000021400"/>
<dbReference type="VEuPathDB" id="PlasmoDB:PfGB4_000031600"/>
<dbReference type="VEuPathDB" id="PlasmoDB:PfGN01_000029700"/>
<dbReference type="VEuPathDB" id="PlasmoDB:PfHB3_000018950"/>
<dbReference type="VEuPathDB" id="PlasmoDB:PfIT_000023900"/>
<dbReference type="VEuPathDB" id="PlasmoDB:PfKE01_000017500"/>
<dbReference type="VEuPathDB" id="PlasmoDB:PfKH01_000056600"/>
<dbReference type="VEuPathDB" id="PlasmoDB:PfKH02_000021000"/>
<dbReference type="VEuPathDB" id="PlasmoDB:PfML01_000121700"/>
<dbReference type="VEuPathDB" id="PlasmoDB:PfNF135_000041200"/>
<dbReference type="VEuPathDB" id="PlasmoDB:PfNF166_000019100"/>
<dbReference type="VEuPathDB" id="PlasmoDB:PfNF54_000012700"/>
<dbReference type="VEuPathDB" id="PlasmoDB:PfSD01_000015000"/>
<dbReference type="VEuPathDB" id="PlasmoDB:PfSN01_000029450"/>
<dbReference type="VEuPathDB" id="PlasmoDB:PfTG01_000076100"/>
<dbReference type="UniPathway" id="UPA00705"/>
<dbReference type="GO" id="GO:0005743">
    <property type="term" value="C:mitochondrial inner membrane"/>
    <property type="evidence" value="ECO:0007669"/>
    <property type="project" value="UniProtKB-SubCell"/>
</dbReference>
<dbReference type="GO" id="GO:0045277">
    <property type="term" value="C:respiratory chain complex IV"/>
    <property type="evidence" value="ECO:0000250"/>
    <property type="project" value="UniProtKB"/>
</dbReference>
<dbReference type="GO" id="GO:0004129">
    <property type="term" value="F:cytochrome-c oxidase activity"/>
    <property type="evidence" value="ECO:0007669"/>
    <property type="project" value="UniProtKB-EC"/>
</dbReference>
<dbReference type="GO" id="GO:0020037">
    <property type="term" value="F:heme binding"/>
    <property type="evidence" value="ECO:0007669"/>
    <property type="project" value="InterPro"/>
</dbReference>
<dbReference type="GO" id="GO:0046872">
    <property type="term" value="F:metal ion binding"/>
    <property type="evidence" value="ECO:0007669"/>
    <property type="project" value="UniProtKB-KW"/>
</dbReference>
<dbReference type="GO" id="GO:0015990">
    <property type="term" value="P:electron transport coupled proton transport"/>
    <property type="evidence" value="ECO:0007669"/>
    <property type="project" value="TreeGrafter"/>
</dbReference>
<dbReference type="GO" id="GO:0006123">
    <property type="term" value="P:mitochondrial electron transport, cytochrome c to oxygen"/>
    <property type="evidence" value="ECO:0007669"/>
    <property type="project" value="TreeGrafter"/>
</dbReference>
<dbReference type="FunFam" id="1.20.210.10:FF:000007">
    <property type="entry name" value="Cytochrome c oxidase subunit 1"/>
    <property type="match status" value="1"/>
</dbReference>
<dbReference type="Gene3D" id="1.20.210.10">
    <property type="entry name" value="Cytochrome c oxidase-like, subunit I domain"/>
    <property type="match status" value="1"/>
</dbReference>
<dbReference type="InterPro" id="IPR023616">
    <property type="entry name" value="Cyt_c_oxase-like_su1_dom"/>
</dbReference>
<dbReference type="InterPro" id="IPR036927">
    <property type="entry name" value="Cyt_c_oxase-like_su1_sf"/>
</dbReference>
<dbReference type="InterPro" id="IPR000883">
    <property type="entry name" value="Cyt_C_Oxase_1"/>
</dbReference>
<dbReference type="InterPro" id="IPR023615">
    <property type="entry name" value="Cyt_c_Oxase_su1_BS"/>
</dbReference>
<dbReference type="PANTHER" id="PTHR10422">
    <property type="entry name" value="CYTOCHROME C OXIDASE SUBUNIT 1"/>
    <property type="match status" value="1"/>
</dbReference>
<dbReference type="PANTHER" id="PTHR10422:SF18">
    <property type="entry name" value="CYTOCHROME C OXIDASE SUBUNIT 1"/>
    <property type="match status" value="1"/>
</dbReference>
<dbReference type="Pfam" id="PF00115">
    <property type="entry name" value="COX1"/>
    <property type="match status" value="1"/>
</dbReference>
<dbReference type="PRINTS" id="PR01165">
    <property type="entry name" value="CYCOXIDASEI"/>
</dbReference>
<dbReference type="SUPFAM" id="SSF81442">
    <property type="entry name" value="Cytochrome c oxidase subunit I-like"/>
    <property type="match status" value="1"/>
</dbReference>
<dbReference type="PROSITE" id="PS50855">
    <property type="entry name" value="COX1"/>
    <property type="match status" value="1"/>
</dbReference>
<dbReference type="PROSITE" id="PS00077">
    <property type="entry name" value="COX1_CUB"/>
    <property type="match status" value="1"/>
</dbReference>
<sequence>MVLNRYSLITNCNHKTLGLYYLWFSFLFGSYGFLLSVILRTELYSSSLRIIAQENVNLYNMIFTIHGIIMIFFNIMPGLFGGFGNYFLPILCGSPELAYPRINSISLLLQPIAFVLVILSTAAEFGGGTGWTLYPPLSTSLMSLSPVAVDVIIFGLLVSGVASIMSSLNFITTVMHLRAKGLTLGILSVSTWSLIITSGMLLLTLPVLTGGVLMLLSDLHFNTLFFDPTFAGDPILYQHLFWFFGHPEVYILILPAFGVISHVISTNYCRNLFGNQSMILAMGCIAVLGSLVWVHHMYTTGLEVDTRAYFTSTTILISIPTGTKVFNWICTYMSSNFGMIHSSSLLSLLFICTFTFGGTTGVILGNAAIDVALHDTYYVIAHFHFVLSIGAIIGLFTTVSAFQDNFFGKNLRENSIVILWSMLFFVGVILTFLPMHFLGFNVMPRRIPDYPDALNGWNMICSIGSTMTLFGLLIFK</sequence>
<accession>Q02766</accession>
<proteinExistence type="inferred from homology"/>
<name>COX1_PLAFA</name>
<protein>
    <recommendedName>
        <fullName>Cytochrome c oxidase subunit 1</fullName>
        <ecNumber>7.1.1.9</ecNumber>
    </recommendedName>
    <alternativeName>
        <fullName>Cytochrome c oxidase polypeptide I</fullName>
    </alternativeName>
</protein>
<keyword id="KW-0106">Calcium</keyword>
<keyword id="KW-0186">Copper</keyword>
<keyword id="KW-0249">Electron transport</keyword>
<keyword id="KW-0349">Heme</keyword>
<keyword id="KW-0408">Iron</keyword>
<keyword id="KW-0460">Magnesium</keyword>
<keyword id="KW-0472">Membrane</keyword>
<keyword id="KW-0479">Metal-binding</keyword>
<keyword id="KW-0496">Mitochondrion</keyword>
<keyword id="KW-0999">Mitochondrion inner membrane</keyword>
<keyword id="KW-0679">Respiratory chain</keyword>
<keyword id="KW-1278">Translocase</keyword>
<keyword id="KW-0812">Transmembrane</keyword>
<keyword id="KW-1133">Transmembrane helix</keyword>
<keyword id="KW-0813">Transport</keyword>
<feature type="chain" id="PRO_0000183396" description="Cytochrome c oxidase subunit 1">
    <location>
        <begin position="1"/>
        <end position="476"/>
    </location>
</feature>
<feature type="transmembrane region" description="Helical" evidence="3">
    <location>
        <begin position="19"/>
        <end position="39"/>
    </location>
</feature>
<feature type="transmembrane region" description="Helical" evidence="3">
    <location>
        <begin position="61"/>
        <end position="81"/>
    </location>
</feature>
<feature type="transmembrane region" description="Helical" evidence="3">
    <location>
        <begin position="105"/>
        <end position="125"/>
    </location>
</feature>
<feature type="transmembrane region" description="Helical" evidence="3">
    <location>
        <begin position="151"/>
        <end position="171"/>
    </location>
</feature>
<feature type="transmembrane region" description="Helical" evidence="3">
    <location>
        <begin position="194"/>
        <end position="214"/>
    </location>
</feature>
<feature type="transmembrane region" description="Helical" evidence="3">
    <location>
        <begin position="240"/>
        <end position="260"/>
    </location>
</feature>
<feature type="transmembrane region" description="Helical" evidence="3">
    <location>
        <begin position="278"/>
        <end position="298"/>
    </location>
</feature>
<feature type="transmembrane region" description="Helical" evidence="3">
    <location>
        <begin position="310"/>
        <end position="330"/>
    </location>
</feature>
<feature type="transmembrane region" description="Helical" evidence="3">
    <location>
        <begin position="345"/>
        <end position="365"/>
    </location>
</feature>
<feature type="transmembrane region" description="Helical" evidence="3">
    <location>
        <begin position="379"/>
        <end position="399"/>
    </location>
</feature>
<feature type="transmembrane region" description="Helical" evidence="3">
    <location>
        <begin position="415"/>
        <end position="435"/>
    </location>
</feature>
<feature type="transmembrane region" description="Helical" evidence="3">
    <location>
        <begin position="455"/>
        <end position="475"/>
    </location>
</feature>
<feature type="binding site" evidence="2">
    <location>
        <position position="42"/>
    </location>
    <ligand>
        <name>Ca(2+)</name>
        <dbReference type="ChEBI" id="CHEBI:29108"/>
    </ligand>
</feature>
<feature type="binding site" description="axial binding residue" evidence="2">
    <location>
        <position position="66"/>
    </location>
    <ligand>
        <name>Fe(II)-heme a</name>
        <dbReference type="ChEBI" id="CHEBI:61715"/>
        <note>low-spin</note>
    </ligand>
    <ligandPart>
        <name>Fe</name>
        <dbReference type="ChEBI" id="CHEBI:18248"/>
    </ligandPart>
</feature>
<feature type="binding site" evidence="2">
    <location>
        <position position="246"/>
    </location>
    <ligand>
        <name>Cu cation</name>
        <dbReference type="ChEBI" id="CHEBI:23378"/>
        <label>B</label>
    </ligand>
</feature>
<feature type="binding site" evidence="1">
    <location>
        <position position="250"/>
    </location>
    <ligand>
        <name>O2</name>
        <dbReference type="ChEBI" id="CHEBI:15379"/>
    </ligand>
</feature>
<feature type="binding site" evidence="2">
    <location>
        <position position="295"/>
    </location>
    <ligand>
        <name>Cu cation</name>
        <dbReference type="ChEBI" id="CHEBI:23378"/>
        <label>B</label>
    </ligand>
</feature>
<feature type="binding site" evidence="2">
    <location>
        <position position="296"/>
    </location>
    <ligand>
        <name>Cu cation</name>
        <dbReference type="ChEBI" id="CHEBI:23378"/>
        <label>B</label>
    </ligand>
</feature>
<feature type="binding site" evidence="2">
    <location>
        <position position="374"/>
    </location>
    <ligand>
        <name>Mg(2+)</name>
        <dbReference type="ChEBI" id="CHEBI:18420"/>
        <note>ligand shared with subunit 2</note>
    </ligand>
</feature>
<feature type="binding site" evidence="2">
    <location>
        <position position="375"/>
    </location>
    <ligand>
        <name>Mg(2+)</name>
        <dbReference type="ChEBI" id="CHEBI:18420"/>
        <note>ligand shared with subunit 2</note>
    </ligand>
</feature>
<feature type="binding site" description="axial binding residue" evidence="2">
    <location>
        <position position="382"/>
    </location>
    <ligand>
        <name>heme a3</name>
        <dbReference type="ChEBI" id="CHEBI:83282"/>
        <note>high-spin</note>
    </ligand>
    <ligandPart>
        <name>Fe</name>
        <dbReference type="ChEBI" id="CHEBI:18248"/>
    </ligandPart>
</feature>
<feature type="binding site" description="axial binding residue" evidence="2">
    <location>
        <position position="384"/>
    </location>
    <ligand>
        <name>Fe(II)-heme a</name>
        <dbReference type="ChEBI" id="CHEBI:61715"/>
        <note>low-spin</note>
    </ligand>
    <ligandPart>
        <name>Fe</name>
        <dbReference type="ChEBI" id="CHEBI:18248"/>
    </ligandPart>
</feature>
<feature type="binding site" evidence="2">
    <location>
        <position position="448"/>
    </location>
    <ligand>
        <name>Ca(2+)</name>
        <dbReference type="ChEBI" id="CHEBI:29108"/>
    </ligand>
</feature>
<feature type="cross-link" description="1'-histidyl-3'-tyrosine (His-Tyr)" evidence="2">
    <location>
        <begin position="246"/>
        <end position="250"/>
    </location>
</feature>
<reference key="1">
    <citation type="journal article" date="1992" name="Nucleic Acids Res.">
        <title>Homologies between the contiguous and fragmented rRNAs of the two Plasmodium falciparum extrachromosomal DNAs are limited to core sequences.</title>
        <authorList>
            <person name="Feagin J.E."/>
            <person name="Werner E."/>
            <person name="Gardner M.J."/>
            <person name="Williamson D.H."/>
            <person name="Wilson R.J."/>
        </authorList>
    </citation>
    <scope>NUCLEOTIDE SEQUENCE [GENOMIC DNA]</scope>
</reference>
<reference key="2">
    <citation type="journal article" date="1988" name="Mol. Biochem. Parasitol.">
        <title>Molecular cloning and partial sequence of a 5.8 kilobase pair repetitive DNA from Plasmodium falciparum.</title>
        <authorList>
            <person name="Suplick K."/>
            <person name="Akella R."/>
            <person name="Saul A.J."/>
            <person name="Vaidya A."/>
        </authorList>
    </citation>
    <scope>NUCLEOTIDE SEQUENCE [GENOMIC DNA]</scope>
    <source>
        <strain>MALAY CAMP</strain>
    </source>
</reference>
<gene>
    <name type="primary">MT-CO1</name>
    <name type="synonym">COI</name>
    <name type="synonym">COXI</name>
    <name type="synonym">MTCO1</name>
</gene>
<organism>
    <name type="scientific">Plasmodium falciparum</name>
    <dbReference type="NCBI Taxonomy" id="5833"/>
    <lineage>
        <taxon>Eukaryota</taxon>
        <taxon>Sar</taxon>
        <taxon>Alveolata</taxon>
        <taxon>Apicomplexa</taxon>
        <taxon>Aconoidasida</taxon>
        <taxon>Haemosporida</taxon>
        <taxon>Plasmodiidae</taxon>
        <taxon>Plasmodium</taxon>
        <taxon>Plasmodium (Laverania)</taxon>
    </lineage>
</organism>